<name>RT08_NEUCR</name>
<accession>Q7SHF3</accession>
<sequence>MGIQQITNMCSHLQNASRARLGLTSLPNTKYNLALALALHRAGFISSITRGGPHPPTPEALMTYEPEPVTSANVATRRLWVGLKYWNEEPVLKELKPISKPSRLVTASLEQLNRVARGFPAGYMKGLQLGECLFVNTDRGVLEVREAVERKVGGLVLCKVK</sequence>
<feature type="chain" id="PRO_0000458573" description="Small ribosomal subunit protein uS8m">
    <location>
        <begin position="1"/>
        <end position="161"/>
    </location>
</feature>
<dbReference type="EMBL" id="CM002236">
    <property type="protein sequence ID" value="EAA36397.2"/>
    <property type="molecule type" value="Genomic_DNA"/>
</dbReference>
<dbReference type="RefSeq" id="XP_965633.2">
    <property type="nucleotide sequence ID" value="XM_960540.3"/>
</dbReference>
<dbReference type="PDB" id="6YW5">
    <property type="method" value="EM"/>
    <property type="resolution" value="2.85 A"/>
    <property type="chains" value="HH=1-161"/>
</dbReference>
<dbReference type="PDB" id="6YWX">
    <property type="method" value="EM"/>
    <property type="resolution" value="3.10 A"/>
    <property type="chains" value="HH=1-161"/>
</dbReference>
<dbReference type="PDBsum" id="6YW5"/>
<dbReference type="PDBsum" id="6YWX"/>
<dbReference type="EMDB" id="EMD-10958"/>
<dbReference type="EMDB" id="EMD-10978"/>
<dbReference type="SMR" id="Q7SHF3"/>
<dbReference type="FunCoup" id="Q7SHF3">
    <property type="interactions" value="67"/>
</dbReference>
<dbReference type="STRING" id="367110.Q7SHF3"/>
<dbReference type="PaxDb" id="5141-EFNCRP00000002274"/>
<dbReference type="EnsemblFungi" id="EAA36397">
    <property type="protein sequence ID" value="EAA36397"/>
    <property type="gene ID" value="NCU02951"/>
</dbReference>
<dbReference type="GeneID" id="3881758"/>
<dbReference type="KEGG" id="ncr:NCU02951"/>
<dbReference type="VEuPathDB" id="FungiDB:NCU02951"/>
<dbReference type="HOGENOM" id="CLU_107213_0_0_1"/>
<dbReference type="InParanoid" id="Q7SHF3"/>
<dbReference type="OMA" id="KYWQNEP"/>
<dbReference type="OrthoDB" id="409928at2759"/>
<dbReference type="Proteomes" id="UP000001805">
    <property type="component" value="Chromosome 1, Linkage Group I"/>
</dbReference>
<dbReference type="GO" id="GO:0005763">
    <property type="term" value="C:mitochondrial small ribosomal subunit"/>
    <property type="evidence" value="ECO:0007669"/>
    <property type="project" value="EnsemblFungi"/>
</dbReference>
<dbReference type="GO" id="GO:0005739">
    <property type="term" value="C:mitochondrion"/>
    <property type="evidence" value="ECO:0000318"/>
    <property type="project" value="GO_Central"/>
</dbReference>
<dbReference type="GO" id="GO:0003735">
    <property type="term" value="F:structural constituent of ribosome"/>
    <property type="evidence" value="ECO:0000318"/>
    <property type="project" value="GO_Central"/>
</dbReference>
<dbReference type="GO" id="GO:0006412">
    <property type="term" value="P:translation"/>
    <property type="evidence" value="ECO:0007669"/>
    <property type="project" value="InterPro"/>
</dbReference>
<dbReference type="FunFam" id="3.30.1370.30:FF:000006">
    <property type="entry name" value="40S ribosomal protein S8"/>
    <property type="match status" value="1"/>
</dbReference>
<dbReference type="FunFam" id="3.30.1490.10:FF:000005">
    <property type="entry name" value="Mitochondrial 40S ribosomal protein S8"/>
    <property type="match status" value="1"/>
</dbReference>
<dbReference type="Gene3D" id="3.30.1370.30">
    <property type="match status" value="1"/>
</dbReference>
<dbReference type="Gene3D" id="3.30.1490.10">
    <property type="match status" value="1"/>
</dbReference>
<dbReference type="InterPro" id="IPR000630">
    <property type="entry name" value="Ribosomal_uS8"/>
</dbReference>
<dbReference type="InterPro" id="IPR035987">
    <property type="entry name" value="Ribosomal_uS8_sf"/>
</dbReference>
<dbReference type="PANTHER" id="PTHR11758">
    <property type="entry name" value="40S RIBOSOMAL PROTEIN S15A"/>
    <property type="match status" value="1"/>
</dbReference>
<dbReference type="Pfam" id="PF00410">
    <property type="entry name" value="Ribosomal_S8"/>
    <property type="match status" value="1"/>
</dbReference>
<dbReference type="SUPFAM" id="SSF56047">
    <property type="entry name" value="Ribosomal protein S8"/>
    <property type="match status" value="1"/>
</dbReference>
<proteinExistence type="evidence at protein level"/>
<reference key="1">
    <citation type="journal article" date="2003" name="Nature">
        <title>The genome sequence of the filamentous fungus Neurospora crassa.</title>
        <authorList>
            <person name="Galagan J.E."/>
            <person name="Calvo S.E."/>
            <person name="Borkovich K.A."/>
            <person name="Selker E.U."/>
            <person name="Read N.D."/>
            <person name="Jaffe D.B."/>
            <person name="FitzHugh W."/>
            <person name="Ma L.-J."/>
            <person name="Smirnov S."/>
            <person name="Purcell S."/>
            <person name="Rehman B."/>
            <person name="Elkins T."/>
            <person name="Engels R."/>
            <person name="Wang S."/>
            <person name="Nielsen C.B."/>
            <person name="Butler J."/>
            <person name="Endrizzi M."/>
            <person name="Qui D."/>
            <person name="Ianakiev P."/>
            <person name="Bell-Pedersen D."/>
            <person name="Nelson M.A."/>
            <person name="Werner-Washburne M."/>
            <person name="Selitrennikoff C.P."/>
            <person name="Kinsey J.A."/>
            <person name="Braun E.L."/>
            <person name="Zelter A."/>
            <person name="Schulte U."/>
            <person name="Kothe G.O."/>
            <person name="Jedd G."/>
            <person name="Mewes H.-W."/>
            <person name="Staben C."/>
            <person name="Marcotte E."/>
            <person name="Greenberg D."/>
            <person name="Roy A."/>
            <person name="Foley K."/>
            <person name="Naylor J."/>
            <person name="Stange-Thomann N."/>
            <person name="Barrett R."/>
            <person name="Gnerre S."/>
            <person name="Kamal M."/>
            <person name="Kamvysselis M."/>
            <person name="Mauceli E.W."/>
            <person name="Bielke C."/>
            <person name="Rudd S."/>
            <person name="Frishman D."/>
            <person name="Krystofova S."/>
            <person name="Rasmussen C."/>
            <person name="Metzenberg R.L."/>
            <person name="Perkins D.D."/>
            <person name="Kroken S."/>
            <person name="Cogoni C."/>
            <person name="Macino G."/>
            <person name="Catcheside D.E.A."/>
            <person name="Li W."/>
            <person name="Pratt R.J."/>
            <person name="Osmani S.A."/>
            <person name="DeSouza C.P.C."/>
            <person name="Glass N.L."/>
            <person name="Orbach M.J."/>
            <person name="Berglund J.A."/>
            <person name="Voelker R."/>
            <person name="Yarden O."/>
            <person name="Plamann M."/>
            <person name="Seiler S."/>
            <person name="Dunlap J.C."/>
            <person name="Radford A."/>
            <person name="Aramayo R."/>
            <person name="Natvig D.O."/>
            <person name="Alex L.A."/>
            <person name="Mannhaupt G."/>
            <person name="Ebbole D.J."/>
            <person name="Freitag M."/>
            <person name="Paulsen I."/>
            <person name="Sachs M.S."/>
            <person name="Lander E.S."/>
            <person name="Nusbaum C."/>
            <person name="Birren B.W."/>
        </authorList>
    </citation>
    <scope>NUCLEOTIDE SEQUENCE [LARGE SCALE GENOMIC DNA]</scope>
    <source>
        <strain>ATCC 24698 / 74-OR23-1A / CBS 708.71 / DSM 1257 / FGSC 987</strain>
    </source>
</reference>
<reference evidence="5 6" key="2">
    <citation type="journal article" date="2020" name="Nat. Commun.">
        <title>Analysis of translating mitoribosome reveals functional characteristics of translation in mitochondria of fungi.</title>
        <authorList>
            <person name="Itoh Y."/>
            <person name="Naschberger A."/>
            <person name="Mortezaei N."/>
            <person name="Herrmann J.M."/>
            <person name="Amunts A."/>
        </authorList>
    </citation>
    <scope>STRUCTURE BY ELECTRON MICROSCOPY (2.85 ANGSTROMS)</scope>
</reference>
<gene>
    <name type="primary">mrps8</name>
    <name type="ORF">NCU02951</name>
</gene>
<evidence type="ECO:0000269" key="1">
    <source>
    </source>
</evidence>
<evidence type="ECO:0000303" key="2">
    <source>
    </source>
</evidence>
<evidence type="ECO:0000305" key="3"/>
<evidence type="ECO:0000305" key="4">
    <source>
    </source>
</evidence>
<evidence type="ECO:0007744" key="5">
    <source>
        <dbReference type="PDB" id="6YW5"/>
    </source>
</evidence>
<evidence type="ECO:0007744" key="6">
    <source>
        <dbReference type="PDB" id="6YWX"/>
    </source>
</evidence>
<organism>
    <name type="scientific">Neurospora crassa (strain ATCC 24698 / 74-OR23-1A / CBS 708.71 / DSM 1257 / FGSC 987)</name>
    <dbReference type="NCBI Taxonomy" id="367110"/>
    <lineage>
        <taxon>Eukaryota</taxon>
        <taxon>Fungi</taxon>
        <taxon>Dikarya</taxon>
        <taxon>Ascomycota</taxon>
        <taxon>Pezizomycotina</taxon>
        <taxon>Sordariomycetes</taxon>
        <taxon>Sordariomycetidae</taxon>
        <taxon>Sordariales</taxon>
        <taxon>Sordariaceae</taxon>
        <taxon>Neurospora</taxon>
    </lineage>
</organism>
<comment type="function">
    <text evidence="4">Component of the mitochondrial ribosome (mitoribosome), a dedicated translation machinery responsible for the synthesis of mitochondrial genome-encoded proteins, including at least some of the essential transmembrane subunits of the mitochondrial respiratory chain. The mitoribosomes are attached to the mitochondrial inner membrane and translation products are cotranslationally integrated into the membrane.</text>
</comment>
<comment type="subunit">
    <text evidence="1">Component of the mitochondrial small ribosomal subunit (mt-SSU). Mature N.crassa 74S mitochondrial ribosomes consist of a small (37S) and a large (54S) subunit. The 37S small subunit contains a 16S ribosomal RNA (16S mt-rRNA) and 32 different proteins. The 54S large subunit contains a 23S rRNA (23S mt-rRNA) and 42 different proteins.</text>
</comment>
<comment type="subcellular location">
    <subcellularLocation>
        <location evidence="1">Mitochondrion</location>
    </subcellularLocation>
</comment>
<comment type="similarity">
    <text evidence="3">Belongs to the universal ribosomal protein uS8 family.</text>
</comment>
<keyword id="KW-0002">3D-structure</keyword>
<keyword id="KW-0496">Mitochondrion</keyword>
<keyword id="KW-1185">Reference proteome</keyword>
<keyword id="KW-0687">Ribonucleoprotein</keyword>
<keyword id="KW-0689">Ribosomal protein</keyword>
<protein>
    <recommendedName>
        <fullName evidence="2">Small ribosomal subunit protein uS8m</fullName>
    </recommendedName>
</protein>